<dbReference type="EMBL" id="U25175">
    <property type="protein sequence ID" value="AAC36130.1"/>
    <property type="molecule type" value="Genomic_DNA"/>
</dbReference>
<dbReference type="EMBL" id="BX284606">
    <property type="protein sequence ID" value="CAA90029.2"/>
    <property type="molecule type" value="Genomic_DNA"/>
</dbReference>
<dbReference type="PIR" id="A56953">
    <property type="entry name" value="A56953"/>
</dbReference>
<dbReference type="PIR" id="T19677">
    <property type="entry name" value="T19677"/>
</dbReference>
<dbReference type="RefSeq" id="NP_509755.2">
    <property type="nucleotide sequence ID" value="NM_077354.4"/>
</dbReference>
<dbReference type="SMR" id="Q10655"/>
<dbReference type="BioGRID" id="46163">
    <property type="interactions" value="18"/>
</dbReference>
<dbReference type="FunCoup" id="Q10655">
    <property type="interactions" value="243"/>
</dbReference>
<dbReference type="IntAct" id="Q10655">
    <property type="interactions" value="2"/>
</dbReference>
<dbReference type="STRING" id="6239.C33D3.1.1"/>
<dbReference type="iPTMnet" id="Q10655"/>
<dbReference type="PaxDb" id="6239-C33D3.1"/>
<dbReference type="PeptideAtlas" id="Q10655"/>
<dbReference type="EnsemblMetazoa" id="C33D3.1.1">
    <property type="protein sequence ID" value="C33D3.1.1"/>
    <property type="gene ID" value="WBGene00001250"/>
</dbReference>
<dbReference type="GeneID" id="181250"/>
<dbReference type="KEGG" id="cel:CELE_C33D3.1"/>
<dbReference type="UCSC" id="C33D3.1">
    <property type="organism name" value="c. elegans"/>
</dbReference>
<dbReference type="AGR" id="WB:WBGene00001250"/>
<dbReference type="CTD" id="181250"/>
<dbReference type="WormBase" id="C33D3.1">
    <property type="protein sequence ID" value="CE31430"/>
    <property type="gene ID" value="WBGene00001250"/>
    <property type="gene designation" value="elt-2"/>
</dbReference>
<dbReference type="eggNOG" id="KOG1601">
    <property type="taxonomic scope" value="Eukaryota"/>
</dbReference>
<dbReference type="GeneTree" id="ENSGT00970000196325"/>
<dbReference type="HOGENOM" id="CLU_644427_0_0_1"/>
<dbReference type="InParanoid" id="Q10655"/>
<dbReference type="OMA" id="NIQVHVM"/>
<dbReference type="OrthoDB" id="515401at2759"/>
<dbReference type="Reactome" id="R-CEL-5683826">
    <property type="pathway name" value="Surfactant metabolism"/>
</dbReference>
<dbReference type="Reactome" id="R-CEL-8936459">
    <property type="pathway name" value="RUNX1 regulates genes involved in megakaryocyte differentiation and platelet function"/>
</dbReference>
<dbReference type="PRO" id="PR:Q10655"/>
<dbReference type="Proteomes" id="UP000001940">
    <property type="component" value="Chromosome X"/>
</dbReference>
<dbReference type="Bgee" id="WBGene00001250">
    <property type="expression patterns" value="Expressed in E lineage cell (C elegans) and 18 other cell types or tissues"/>
</dbReference>
<dbReference type="GO" id="GO:0005634">
    <property type="term" value="C:nucleus"/>
    <property type="evidence" value="ECO:0000314"/>
    <property type="project" value="UniProtKB"/>
</dbReference>
<dbReference type="GO" id="GO:0003700">
    <property type="term" value="F:DNA-binding transcription factor activity"/>
    <property type="evidence" value="ECO:0000315"/>
    <property type="project" value="WormBase"/>
</dbReference>
<dbReference type="GO" id="GO:0000981">
    <property type="term" value="F:DNA-binding transcription factor activity, RNA polymerase II-specific"/>
    <property type="evidence" value="ECO:0000314"/>
    <property type="project" value="WormBase"/>
</dbReference>
<dbReference type="GO" id="GO:0003690">
    <property type="term" value="F:double-stranded DNA binding"/>
    <property type="evidence" value="ECO:0000314"/>
    <property type="project" value="WormBase"/>
</dbReference>
<dbReference type="GO" id="GO:0004857">
    <property type="term" value="F:enzyme inhibitor activity"/>
    <property type="evidence" value="ECO:0000314"/>
    <property type="project" value="WormBase"/>
</dbReference>
<dbReference type="GO" id="GO:0000978">
    <property type="term" value="F:RNA polymerase II cis-regulatory region sequence-specific DNA binding"/>
    <property type="evidence" value="ECO:0000314"/>
    <property type="project" value="UniProtKB"/>
</dbReference>
<dbReference type="GO" id="GO:0000977">
    <property type="term" value="F:RNA polymerase II transcription regulatory region sequence-specific DNA binding"/>
    <property type="evidence" value="ECO:0000314"/>
    <property type="project" value="WormBase"/>
</dbReference>
<dbReference type="GO" id="GO:0008270">
    <property type="term" value="F:zinc ion binding"/>
    <property type="evidence" value="ECO:0007669"/>
    <property type="project" value="UniProtKB-KW"/>
</dbReference>
<dbReference type="GO" id="GO:0045165">
    <property type="term" value="P:cell fate commitment"/>
    <property type="evidence" value="ECO:0000318"/>
    <property type="project" value="GO_Central"/>
</dbReference>
<dbReference type="GO" id="GO:0050829">
    <property type="term" value="P:defense response to Gram-negative bacterium"/>
    <property type="evidence" value="ECO:0000315"/>
    <property type="project" value="UniProtKB"/>
</dbReference>
<dbReference type="GO" id="GO:0008340">
    <property type="term" value="P:determination of adult lifespan"/>
    <property type="evidence" value="ECO:0000315"/>
    <property type="project" value="UniProtKB"/>
</dbReference>
<dbReference type="GO" id="GO:0007586">
    <property type="term" value="P:digestion"/>
    <property type="evidence" value="ECO:0000315"/>
    <property type="project" value="WormBase"/>
</dbReference>
<dbReference type="GO" id="GO:0007492">
    <property type="term" value="P:endoderm development"/>
    <property type="evidence" value="ECO:0000315"/>
    <property type="project" value="WormBase"/>
</dbReference>
<dbReference type="GO" id="GO:0045087">
    <property type="term" value="P:innate immune response"/>
    <property type="evidence" value="ECO:0000315"/>
    <property type="project" value="WormBase"/>
</dbReference>
<dbReference type="GO" id="GO:0000122">
    <property type="term" value="P:negative regulation of transcription by RNA polymerase II"/>
    <property type="evidence" value="ECO:0000318"/>
    <property type="project" value="GO_Central"/>
</dbReference>
<dbReference type="GO" id="GO:0002119">
    <property type="term" value="P:nematode larval development"/>
    <property type="evidence" value="ECO:0000315"/>
    <property type="project" value="UniProtKB"/>
</dbReference>
<dbReference type="GO" id="GO:0045944">
    <property type="term" value="P:positive regulation of transcription by RNA polymerase II"/>
    <property type="evidence" value="ECO:0000314"/>
    <property type="project" value="WormBase"/>
</dbReference>
<dbReference type="GO" id="GO:0030856">
    <property type="term" value="P:regulation of epithelial cell differentiation"/>
    <property type="evidence" value="ECO:0000315"/>
    <property type="project" value="WormBase"/>
</dbReference>
<dbReference type="GO" id="GO:0010468">
    <property type="term" value="P:regulation of gene expression"/>
    <property type="evidence" value="ECO:0000315"/>
    <property type="project" value="UniProtKB"/>
</dbReference>
<dbReference type="CDD" id="cd00202">
    <property type="entry name" value="ZnF_GATA"/>
    <property type="match status" value="1"/>
</dbReference>
<dbReference type="FunFam" id="3.30.50.10:FF:000032">
    <property type="entry name" value="Transcription factor GATA-3"/>
    <property type="match status" value="1"/>
</dbReference>
<dbReference type="Gene3D" id="3.30.50.10">
    <property type="entry name" value="Erythroid Transcription Factor GATA-1, subunit A"/>
    <property type="match status" value="1"/>
</dbReference>
<dbReference type="InterPro" id="IPR039355">
    <property type="entry name" value="Transcription_factor_GATA"/>
</dbReference>
<dbReference type="InterPro" id="IPR000679">
    <property type="entry name" value="Znf_GATA"/>
</dbReference>
<dbReference type="InterPro" id="IPR013088">
    <property type="entry name" value="Znf_NHR/GATA"/>
</dbReference>
<dbReference type="PANTHER" id="PTHR10071:SF281">
    <property type="entry name" value="BOX A-BINDING FACTOR-RELATED"/>
    <property type="match status" value="1"/>
</dbReference>
<dbReference type="PANTHER" id="PTHR10071">
    <property type="entry name" value="TRANSCRIPTION FACTOR GATA FAMILY MEMBER"/>
    <property type="match status" value="1"/>
</dbReference>
<dbReference type="Pfam" id="PF00320">
    <property type="entry name" value="GATA"/>
    <property type="match status" value="1"/>
</dbReference>
<dbReference type="PRINTS" id="PR00619">
    <property type="entry name" value="GATAZNFINGER"/>
</dbReference>
<dbReference type="SMART" id="SM00401">
    <property type="entry name" value="ZnF_GATA"/>
    <property type="match status" value="1"/>
</dbReference>
<dbReference type="SUPFAM" id="SSF57716">
    <property type="entry name" value="Glucocorticoid receptor-like (DNA-binding domain)"/>
    <property type="match status" value="1"/>
</dbReference>
<dbReference type="PROSITE" id="PS00344">
    <property type="entry name" value="GATA_ZN_FINGER_1"/>
    <property type="match status" value="1"/>
</dbReference>
<dbReference type="PROSITE" id="PS50114">
    <property type="entry name" value="GATA_ZN_FINGER_2"/>
    <property type="match status" value="1"/>
</dbReference>
<comment type="function">
    <text evidence="3 4 5 6 8 9 10 11 12 13 14 16 17 18 19 20 22 24 25 27 29 30 31 32">Transcriptional activator that binds to the consensus sequence 5'-[AT]GATA[AG]-3' (PubMed:15733671, PubMed:18003741, PubMed:18024960, PubMed:18448117, PubMed:26016853, PubMed:26700680, PubMed:26963674, PubMed:7782329). Predominantly directs the transcription of intestinal genes such as ges-1, cpr-6, pho-1, ftn-1, vit-2 and lev-11, and itself (PubMed:10518545, PubMed:15733671, PubMed:18448117, PubMed:19111532, PubMed:26700680, PubMed:26963674, PubMed:9659934). Required for gut-specific differentiation, specifically acting with the GATA region-binding transcription factor elt-7 to control normal gene expression and promote normal formation of the intestine (PubMed:20807527). Regulates intestinal gene expression in response to hypoxia to promote longevity (PubMed:25284791). Modulation of longevity may, in part, be the result of regulation of expression of daf-16 isoforms d and f in the intestine (PubMed:24834345). Regulates tissue specific gene expression at basal levels and in response to bacterial infection in the intestine to control innate immunity (PubMed:16968778, PubMed:21168435, PubMed:25340560, PubMed:26016853). Plays a role in the induction of metal-responsive genes, activating gene expression from zinc-activated promoters and iron-dependent promoters and enhancers (PubMed:18024960, PubMed:22194696, PubMed:25552416). May regulate the expression of genes that control sensitivity to oxidative stress, in a mab-3-dependent manner, and osmotic stress, in conjunction with the GATA region-binding transcription factor elt-3 (PubMed:17901115, PubMed:20126308, PubMed:20498281). May play a role in sphingolipid signaling by regulating the expression of the sphingosine-1-phosphate degrading enzyme, sphingosine-1-phosphate lyase (PubMed:15734735). May act with the Notch signaling pathway to promote endodermal gene expression (PubMed:18003741). Has a protective role in response to infection by Gram-negative bacteria such as S.enterica, E.coli, P.aeruginosa and B.pseudomallei, Gram-positive bacterium E.faecalis and fungal pathogen C.neoformans (PubMed:16968778, PubMed:17183709, PubMed:21168435, PubMed:23980181, PubMed:30265660). An association with the 26S proteasome regulatory subunit rpt-6, in part, controls gene expression in response to infection by P.aeruginosa (PubMed:30265660). Regulates gene expression during the recovery phase following a bacterial infection (PubMed:25340560, PubMed:30265660). May act with p38-activated transcription factors to control p38 gene induction in response to bacterial infection (PubMed:22967128, PubMed:26016853). Controls lysosome formation in the intestine by controlling lysosomal gene expression (PubMed:26828939).</text>
</comment>
<comment type="subunit">
    <text evidence="10 12 31">Interacts with lag-1 (PubMed:18003741). Interacts with pha-4 (PubMed:18448117). Interacts with rpt-6 (PubMed:30265660).</text>
</comment>
<comment type="subcellular location">
    <subcellularLocation>
        <location evidence="3 22 31 32 33">Nucleus</location>
    </subcellularLocation>
    <text evidence="3">Expressed in discrete foci within nuclei of the gut in embryos.</text>
</comment>
<comment type="tissue specificity">
    <text evidence="7 27">Expressed in the intestine.</text>
</comment>
<comment type="developmental stage">
    <text evidence="3 15 17 21 28 29 32 33">Expressed at all stages but more highly during embryogenesis, with expression beginning at the 2E cell stage (endodermal stage). Expression continues to adulthood.</text>
</comment>
<comment type="induction">
    <text evidence="6">By P.aeruginosa infection.</text>
</comment>
<comment type="PTM">
    <text evidence="22">May be ubiquitinated in response to infection by B.pseudomallei.</text>
</comment>
<comment type="disruption phenotype">
    <text evidence="6 8 14 16 17 18 22 23 24 25 26 27 30 31 33">Animals do not survive for long beyond hatching and frequently die at the L1 larval stage (PubMed:20807527, PubMed:9659934). Upon attempts to feed, food accumulates behind the pharynx and there is blockage of the brush border that surrounds the gut lumen in surviving L1 stage larvae (PubMed:20807527, PubMed:9659934). RNAi-mediated knockdown results in a reduced body size and reduced gene expression from zinc-activated promoters and of genes related to the immune response (PubMed:25552416, PubMed:26016853). This reduction in target gene expression is enhanced when infected with B.pseudomallei (PubMed:23980181). RNAi-mediated knockdown results in increased sensitivity and mortality when exposed to Gram-negative bacteria such as S.enterica, E.coli, P.aeruginosa and B.pseudomallei, Gram-positive bacterium E.faecalis and fungal pathogen C.neoformans (PubMed:16968778, PubMed:17183709, PubMed:21168435, PubMed:23980181, PubMed:30265660). Furthermore, when exposed to E.coli and P.aeruginosa, the intestines distend due to the colonization and proliferation of its bacterial content (PubMed:16968778, PubMed:17183709, PubMed:21168435). RNAi-mediated knockdown at the L4 larval stage, in addition, prevents the recovery of P.aeruginosa infected animals treated with the antibiotic streptomycin (PubMed:30265660). RNAi-mediated knockdown also results in increased sensitivity to heat and to arsenite- and paraquat-induced oxidative stress (PubMed:16968778, PubMed:20498281). RNAi-mediated knockdown results in fewer intestinal lysosomes (PubMed:26828939). RNAi-mediated knockdown during larval development results in smaller animals (PubMed:26016853). RNAi-mediated knockdown specifically during the L4 larval stage inhibits the expression of intestinal genes such as gsto-1, which is normally induced under hypoxic conditions, prevents increased longevity induced by transient hypoxia exposure and prevents mitohormesis when exposed to the mitochondrial reactive oxygen species-generating agent paraquat (PubMed:25284791). In addition, RNAi-mediated knockdown at this stage prevents the expression of genes that are usually up-regulated during recovery in response to tetracycline or kanamycin treatment following an infection and furthermore, prevents the recovery of S.enterica infected animals treated with tetracycline (PubMed:25340560). RNAi-mediated knockdown on an elt-3 knockout background results in increased sensitivity to osmotic stress (PubMed:20126308). Double mutation with elt-7 results in arrest at the L1 stage of larval development, reduced expression of gut-specific genes and a severe disruption to normal gut differentiation with the absence of birefringent and rhabditin granules, which are characteristic of normal gut differentiation, largely at the regions of the cell that interface with the pharyngeal and rectal valves (PubMed:20807527). These mutants also have essentially no gut lumen, with the infrequent occurance of patches of lumen and brush border in few animals, and reduced gut epithelialization as indicated by reduced expression of epithelial markers erm-1b, itx-1 and ajm-1 (PubMed:20807527). RNAi-mediated knockdown specifically during the L4 larval stage reduces the expression of daf-16 isoforms d and f, but has little or effect on isoform a.</text>
</comment>
<gene>
    <name evidence="35" type="primary">elt-2</name>
    <name evidence="35" type="ORF">C33D3.1</name>
</gene>
<organism>
    <name type="scientific">Caenorhabditis elegans</name>
    <dbReference type="NCBI Taxonomy" id="6239"/>
    <lineage>
        <taxon>Eukaryota</taxon>
        <taxon>Metazoa</taxon>
        <taxon>Ecdysozoa</taxon>
        <taxon>Nematoda</taxon>
        <taxon>Chromadorea</taxon>
        <taxon>Rhabditida</taxon>
        <taxon>Rhabditina</taxon>
        <taxon>Rhabditomorpha</taxon>
        <taxon>Rhabditoidea</taxon>
        <taxon>Rhabditidae</taxon>
        <taxon>Peloderinae</taxon>
        <taxon>Caenorhabditis</taxon>
    </lineage>
</organism>
<keyword id="KW-0010">Activator</keyword>
<keyword id="KW-0221">Differentiation</keyword>
<keyword id="KW-0238">DNA-binding</keyword>
<keyword id="KW-0479">Metal-binding</keyword>
<keyword id="KW-0539">Nucleus</keyword>
<keyword id="KW-1185">Reference proteome</keyword>
<keyword id="KW-0804">Transcription</keyword>
<keyword id="KW-0805">Transcription regulation</keyword>
<keyword id="KW-0832">Ubl conjugation</keyword>
<keyword id="KW-0862">Zinc</keyword>
<keyword id="KW-0863">Zinc-finger</keyword>
<name>ELT2_CAEEL</name>
<accession>Q10655</accession>
<accession>Q18371</accession>
<evidence type="ECO:0000255" key="1">
    <source>
        <dbReference type="PROSITE-ProRule" id="PRU00094"/>
    </source>
</evidence>
<evidence type="ECO:0000256" key="2">
    <source>
        <dbReference type="SAM" id="MobiDB-lite"/>
    </source>
</evidence>
<evidence type="ECO:0000269" key="3">
    <source>
    </source>
</evidence>
<evidence type="ECO:0000269" key="4">
    <source>
    </source>
</evidence>
<evidence type="ECO:0000269" key="5">
    <source>
    </source>
</evidence>
<evidence type="ECO:0000269" key="6">
    <source>
    </source>
</evidence>
<evidence type="ECO:0000269" key="7">
    <source>
    </source>
</evidence>
<evidence type="ECO:0000269" key="8">
    <source>
    </source>
</evidence>
<evidence type="ECO:0000269" key="9">
    <source>
    </source>
</evidence>
<evidence type="ECO:0000269" key="10">
    <source>
    </source>
</evidence>
<evidence type="ECO:0000269" key="11">
    <source>
    </source>
</evidence>
<evidence type="ECO:0000269" key="12">
    <source>
    </source>
</evidence>
<evidence type="ECO:0000269" key="13">
    <source>
    </source>
</evidence>
<evidence type="ECO:0000269" key="14">
    <source>
    </source>
</evidence>
<evidence type="ECO:0000269" key="15">
    <source>
    </source>
</evidence>
<evidence type="ECO:0000269" key="16">
    <source>
    </source>
</evidence>
<evidence type="ECO:0000269" key="17">
    <source>
    </source>
</evidence>
<evidence type="ECO:0000269" key="18">
    <source>
    </source>
</evidence>
<evidence type="ECO:0000269" key="19">
    <source>
    </source>
</evidence>
<evidence type="ECO:0000269" key="20">
    <source>
    </source>
</evidence>
<evidence type="ECO:0000269" key="21">
    <source>
    </source>
</evidence>
<evidence type="ECO:0000269" key="22">
    <source>
    </source>
</evidence>
<evidence type="ECO:0000269" key="23">
    <source>
    </source>
</evidence>
<evidence type="ECO:0000269" key="24">
    <source>
    </source>
</evidence>
<evidence type="ECO:0000269" key="25">
    <source>
    </source>
</evidence>
<evidence type="ECO:0000269" key="26">
    <source>
    </source>
</evidence>
<evidence type="ECO:0000269" key="27">
    <source>
    </source>
</evidence>
<evidence type="ECO:0000269" key="28">
    <source>
    </source>
</evidence>
<evidence type="ECO:0000269" key="29">
    <source>
    </source>
</evidence>
<evidence type="ECO:0000269" key="30">
    <source>
    </source>
</evidence>
<evidence type="ECO:0000269" key="31">
    <source>
    </source>
</evidence>
<evidence type="ECO:0000269" key="32">
    <source>
    </source>
</evidence>
<evidence type="ECO:0000269" key="33">
    <source>
    </source>
</evidence>
<evidence type="ECO:0000305" key="34"/>
<evidence type="ECO:0000312" key="35">
    <source>
        <dbReference type="WormBase" id="C33D3.1"/>
    </source>
</evidence>
<reference key="1">
    <citation type="journal article" date="1995" name="J. Biol. Chem.">
        <title>elt-2, a second GATA factor from the nematode Caenorhabditis elegans.</title>
        <authorList>
            <person name="Hawkins M.G."/>
            <person name="McGhee J.D."/>
        </authorList>
    </citation>
    <scope>NUCLEOTIDE SEQUENCE [GENOMIC DNA]</scope>
    <scope>FUNCTION</scope>
    <scope>SUBCELLULAR LOCATION</scope>
    <scope>DEVELOPMENTAL STAGE</scope>
    <source>
        <strain>Bristol N2</strain>
    </source>
</reference>
<reference key="2">
    <citation type="journal article" date="1998" name="Science">
        <title>Genome sequence of the nematode C. elegans: a platform for investigating biology.</title>
        <authorList>
            <consortium name="The C. elegans sequencing consortium"/>
        </authorList>
    </citation>
    <scope>NUCLEOTIDE SEQUENCE [LARGE SCALE GENOMIC DNA]</scope>
    <source>
        <strain>Bristol N2</strain>
    </source>
</reference>
<reference key="3">
    <citation type="journal article" date="1998" name="Dev. Biol.">
        <title>The GATA-factor elt-2 is essential for formation of the Caenorhabditis elegans intestine.</title>
        <authorList>
            <person name="Fukushige T."/>
            <person name="Hawkins M.G."/>
            <person name="McGhee J.D."/>
        </authorList>
    </citation>
    <scope>FUNCTION</scope>
    <scope>SUBCELLULAR LOCATION</scope>
    <scope>DEVELOPMENTAL STAGE</scope>
    <scope>DISRUPTION PHENOTYPE</scope>
</reference>
<reference key="4">
    <citation type="journal article" date="1999" name="Proc. Natl. Acad. Sci. U.S.A.">
        <title>Direct visualization of the elt-2 gut-specific GATA factor binding to a target promoter inside the living Caenorhabditis elegans embryo.</title>
        <authorList>
            <person name="Fukushige T."/>
            <person name="Hendzel M.J."/>
            <person name="Bazett-Jones D.P."/>
            <person name="McGhee J.D."/>
        </authorList>
    </citation>
    <scope>FUNCTION</scope>
    <scope>SUBCELLULAR LOCATION</scope>
</reference>
<reference key="5">
    <citation type="journal article" date="2005" name="Dev. Biol.">
        <title>Transcriptional control and patterning of the pho-1 gene, an essential acid phosphatase expressed in the C. elegans intestine.</title>
        <authorList>
            <person name="Fukushige T."/>
            <person name="Goszczynski B."/>
            <person name="Yan J."/>
            <person name="McGhee J.D."/>
        </authorList>
    </citation>
    <scope>FUNCTION</scope>
</reference>
<reference key="6">
    <citation type="journal article" date="2005" name="J. Biol. Chem.">
        <title>Regulation of sphingosine-1-phosphate lyase gene expression by members of the GATA family of transcription factors.</title>
        <authorList>
            <person name="Oskouian B."/>
            <person name="Mendel J."/>
            <person name="Shocron E."/>
            <person name="Lee M.A. Jr."/>
            <person name="Fyrst H."/>
            <person name="Saba J.D."/>
        </authorList>
    </citation>
    <scope>FUNCTION</scope>
</reference>
<reference key="7">
    <citation type="journal article" date="2006" name="Proc. Natl. Acad. Sci. U.S.A.">
        <title>A conserved role for a GATA transcription factor in regulating epithelial innate immune responses.</title>
        <authorList>
            <person name="Shapira M."/>
            <person name="Hamlin B.J."/>
            <person name="Rong J."/>
            <person name="Chen K."/>
            <person name="Ronen M."/>
            <person name="Tan M.W."/>
        </authorList>
    </citation>
    <scope>INDUCTION BY P.AERUGINOSA</scope>
</reference>
<reference key="8">
    <citation type="journal article" date="2006" name="PLoS ONE">
        <title>GATA transcription factor required for immunity to bacterial and fungal pathogens.</title>
        <authorList>
            <person name="Kerry S."/>
            <person name="TeKippe M."/>
            <person name="Gaddis N.C."/>
            <person name="Aballay A."/>
        </authorList>
    </citation>
    <scope>FUNCTION</scope>
    <scope>DISRUPTION PHENOTYPE</scope>
</reference>
<reference key="9">
    <citation type="journal article" date="2007" name="Development">
        <title>Notch-GATA synergy promotes endoderm-specific expression of ref-1 in C. elegans.</title>
        <authorList>
            <person name="Neves A."/>
            <person name="English K."/>
            <person name="Priess J.R."/>
        </authorList>
    </citation>
    <scope>FUNCTION</scope>
    <scope>INTERACTION WITH LAG-1</scope>
</reference>
<reference key="10">
    <citation type="journal article" date="2007" name="Dev. Biol.">
        <title>The ELT-2 GATA-factor and the global regulation of transcription in the C. elegans intestine.</title>
        <authorList>
            <person name="McGhee J.D."/>
            <person name="Sleumer M.C."/>
            <person name="Bilenky M."/>
            <person name="Wong K."/>
            <person name="McKay S.J."/>
            <person name="Goszczynski B."/>
            <person name="Tian H."/>
            <person name="Krich N.D."/>
            <person name="Khattra J."/>
            <person name="Holt R.A."/>
            <person name="Baillie D.L."/>
            <person name="Kohara Y."/>
            <person name="Marra M.A."/>
            <person name="Jones S.J."/>
            <person name="Moerman D.G."/>
            <person name="Robertson A.G."/>
        </authorList>
    </citation>
    <scope>TISSUE SPECIFICITY</scope>
</reference>
<reference key="11">
    <citation type="journal article" date="2008" name="FASEB J.">
        <title>Oxidative stress in Caenorhabditis elegans: protective effects of the Omega class glutathione transferase (GSTO-1).</title>
        <authorList>
            <person name="Burmeister C."/>
            <person name="Luersen K."/>
            <person name="Heinick A."/>
            <person name="Hussein A."/>
            <person name="Domagalski M."/>
            <person name="Walter R.D."/>
            <person name="Liebau E."/>
        </authorList>
    </citation>
    <scope>FUNCTION</scope>
</reference>
<reference key="12">
    <citation type="journal article" date="2008" name="J. Biol. Chem.">
        <title>An iron enhancer element in the FTN-1 gene directs iron-dependent expression in Caenorhabditis elegans intestine.</title>
        <authorList>
            <person name="Romney S.J."/>
            <person name="Thacker C."/>
            <person name="Leibold E.A."/>
        </authorList>
    </citation>
    <scope>FUNCTION</scope>
</reference>
<reference key="13">
    <citation type="journal article" date="2008" name="J. Mol. Biol.">
        <title>Transcription factors GATA/ELT-2 and forkhead/HNF-3/PHA-4 regulate the tropomyosin gene expression in the pharynx and intestine of Caenorhabditis elegans.</title>
        <authorList>
            <person name="Anokye-Danso F."/>
            <person name="Anyanful A."/>
            <person name="Sakube Y."/>
            <person name="Kagawa H."/>
        </authorList>
    </citation>
    <scope>FUNCTION</scope>
    <scope>INTERACTION WITH PHA-4</scope>
</reference>
<reference key="14">
    <citation type="journal article" date="2009" name="Dev. Biol.">
        <title>ELT-2 is the predominant transcription factor controlling differentiation and function of the C. elegans intestine, from embryo to adult.</title>
        <authorList>
            <person name="McGhee J.D."/>
            <person name="Fukushige T."/>
            <person name="Krause M.W."/>
            <person name="Minnema S.E."/>
            <person name="Goszczynski B."/>
            <person name="Gaudet J."/>
            <person name="Kohara Y."/>
            <person name="Bossinger O."/>
            <person name="Zhao Y."/>
            <person name="Khattra J."/>
            <person name="Hirst M."/>
            <person name="Jones S.J."/>
            <person name="Marra M.A."/>
            <person name="Ruzanov P."/>
            <person name="Warner A."/>
            <person name="Zapf R."/>
            <person name="Moerman D.G."/>
            <person name="Kalb J.M."/>
        </authorList>
    </citation>
    <scope>FUNCTION</scope>
</reference>
<reference key="15">
    <citation type="journal article" date="2010" name="Dev. Biol.">
        <title>Endoderm development in Caenorhabditis elegans: the synergistic action of ELT-2 and -7 mediates the specification-differentiation transition.</title>
        <authorList>
            <person name="Sommermann E.M."/>
            <person name="Strohmaier K.R."/>
            <person name="Maduro M.F."/>
            <person name="Rothman J.H."/>
        </authorList>
    </citation>
    <scope>FUNCTION</scope>
    <scope>DEVELOPMENTAL STAGE</scope>
    <scope>DISRUPTION PHENOTYPE</scope>
</reference>
<reference key="16">
    <citation type="journal article" date="2010" name="Mol. Cell. Biol.">
        <title>The DM domain transcription factor MAB-3 regulates male hypersensitivity to oxidative stress in Caenorhabditis elegans.</title>
        <authorList>
            <person name="Inoue H."/>
            <person name="Nishida E."/>
        </authorList>
    </citation>
    <scope>FUNCTION</scope>
    <scope>DISRUPTION PHENOTYPE</scope>
</reference>
<reference key="17">
    <citation type="journal article" date="2010" name="Nature">
        <title>Variability in gene expression underlies incomplete penetrance.</title>
        <authorList>
            <person name="Raj A."/>
            <person name="Rifkin S.A."/>
            <person name="Andersen E."/>
            <person name="van Oudenaarden A."/>
        </authorList>
    </citation>
    <scope>DEVELOPMENTAL STAGE</scope>
</reference>
<reference key="18">
    <citation type="journal article" date="2010" name="PLoS ONE">
        <title>Genetic and physiological activation of osmosensitive gene expression mimics transcriptional signatures of pathogen infection in C. elegans.</title>
        <authorList>
            <person name="Rohlfing A.K."/>
            <person name="Miteva Y."/>
            <person name="Hannenhalli S."/>
            <person name="Lamitina T."/>
        </authorList>
    </citation>
    <scope>FUNCTION</scope>
    <scope>DISRUPTION PHENOTYPE</scope>
</reference>
<reference key="19">
    <citation type="journal article" date="2011" name="Dev. Comp. Immunol.">
        <title>Mode of bacterial pathogenesis determines phenotype in elt-2 and elt-7 RNAi Caenorhabditis elegans.</title>
        <authorList>
            <person name="Elliott S.L."/>
            <person name="Sturgeon C.R."/>
            <person name="Travers D.M."/>
            <person name="Montgomery M.C."/>
        </authorList>
    </citation>
    <scope>FUNCTION</scope>
    <scope>DISRUPTION PHENOTYPE</scope>
</reference>
<reference key="20">
    <citation type="journal article" date="2011" name="PLoS Genet.">
        <title>HIF-1 regulates iron homeostasis in Caenorhabditis elegans by activation and inhibition of genes involved in iron uptake and storage.</title>
        <authorList>
            <person name="Romney S.J."/>
            <person name="Newman B.S."/>
            <person name="Thacker C."/>
            <person name="Leibold E.A."/>
        </authorList>
    </citation>
    <scope>FUNCTION</scope>
</reference>
<reference key="21">
    <citation type="journal article" date="2012" name="Radiat. Res.">
        <title>Innate immune genes including a mucin-like gene, mul-1, induced by ionizing radiation in Caenorhabditis elegans.</title>
        <authorList>
            <person name="Kimura T."/>
            <person name="Takanami T."/>
            <person name="Sakashita T."/>
            <person name="Wada S."/>
            <person name="Kobayashi Y."/>
            <person name="Higashitani A."/>
        </authorList>
    </citation>
    <scope>FUNCTION</scope>
</reference>
<reference key="22">
    <citation type="journal article" date="2013" name="Development">
        <title>Gene transcription is coordinated with, but not dependent on, cell divisions during C. elegans embryonic fate specification.</title>
        <authorList>
            <person name="Nair G."/>
            <person name="Walton T."/>
            <person name="Murray J.I."/>
            <person name="Raj A."/>
        </authorList>
    </citation>
    <scope>DEVELOPMENTAL STAGE</scope>
</reference>
<reference key="23">
    <citation type="journal article" date="2013" name="Proc. Natl. Acad. Sci. U.S.A.">
        <title>Burkholderia pseudomallei suppresses Caenorhabditis elegans immunity by specific degradation of a GATA transcription factor.</title>
        <authorList>
            <person name="Lee S.H."/>
            <person name="Wong R.R."/>
            <person name="Chin C.Y."/>
            <person name="Lim T.Y."/>
            <person name="Eng S.A."/>
            <person name="Kong C."/>
            <person name="Ijap N.A."/>
            <person name="Lau M.S."/>
            <person name="Lim M.P."/>
            <person name="Gan Y.H."/>
            <person name="He F.L."/>
            <person name="Tan M.W."/>
            <person name="Nathan S."/>
        </authorList>
    </citation>
    <scope>FUNCTION</scope>
    <scope>SUBCELLULAR LOCATION</scope>
    <scope>UBIQUITINATION</scope>
    <scope>DISRUPTION PHENOTYPE</scope>
</reference>
<reference key="24">
    <citation type="journal article" date="2014" name="Cell Rep.">
        <title>TOR signaling couples oxygen sensing to lifespan in C. elegans.</title>
        <authorList>
            <person name="Schieber M."/>
            <person name="Chandel N.S."/>
        </authorList>
    </citation>
    <scope>FUNCTION</scope>
    <scope>DISRUPTION PHENOTYPE</scope>
</reference>
<reference key="25">
    <citation type="journal article" date="2014" name="Longev. Healthspan">
        <title>Transcriptional regulation of Caenorhabditis elegans FOXO/DAF-16 modulates lifespan.</title>
        <authorList>
            <person name="Bansal A."/>
            <person name="Kwon E.S."/>
            <person name="Conte D. Jr."/>
            <person name="Liu H."/>
            <person name="Gilchrist M.J."/>
            <person name="MacNeil L.T."/>
            <person name="Tissenbaum H.A."/>
        </authorList>
    </citation>
    <scope>FUNCTION</scope>
    <scope>DISRUPTION PHENOTYPE</scope>
</reference>
<reference key="26">
    <citation type="journal article" date="2014" name="PLoS Genet.">
        <title>Recovery from an acute infection in C. elegans requires the GATA transcription factor ELT-2.</title>
        <authorList>
            <person name="Head B."/>
            <person name="Aballay A."/>
        </authorList>
    </citation>
    <scope>FUNCTION</scope>
    <scope>DISRUPTION PHENOTYPE</scope>
</reference>
<reference key="27">
    <citation type="journal article" date="2016" name="Development">
        <title>The Function and Regulation of the GATA Factor ELT-2 in the C. elegans Endoderm.</title>
        <authorList>
            <person name="Wiesenfahrt T."/>
            <person name="Berg J.Y."/>
            <person name="Nishimura E.O."/>
            <person name="Robinson A.G."/>
            <person name="Goszczynski B."/>
            <person name="Lieb J.D."/>
            <person name="McGhee J.D."/>
        </authorList>
    </citation>
    <scope>FUNCTION</scope>
    <scope>DEVELOPMENTAL STAGE</scope>
</reference>
<reference key="28">
    <citation type="journal article" date="2015" name="Nucleic Acids Res.">
        <title>A modular system of DNA enhancer elements mediates tissue-specific activation of transcription by high dietary zinc in C. elegans.</title>
        <authorList>
            <person name="Roh H.C."/>
            <person name="Dimitrov I."/>
            <person name="Deshmukh K."/>
            <person name="Zhao G."/>
            <person name="Warnhoff K."/>
            <person name="Cabrera D."/>
            <person name="Tsai W."/>
            <person name="Kornfeld K."/>
        </authorList>
    </citation>
    <scope>FUNCTION</scope>
    <scope>DISRUPTION PHENOTYPE</scope>
</reference>
<reference key="29">
    <citation type="journal article" date="2015" name="PLoS Genet.">
        <title>The developmental intestinal regulator ELT-2 controls p38-dependent immune responses in adult C. elegans.</title>
        <authorList>
            <person name="Block D.H."/>
            <person name="Twumasi-Boateng K."/>
            <person name="Kang H.S."/>
            <person name="Carlisle J.A."/>
            <person name="Hanganu A."/>
            <person name="Lai T.Y."/>
            <person name="Shapira M."/>
        </authorList>
    </citation>
    <scope>FUNCTION</scope>
    <scope>TISSUE SPECIFICITY</scope>
    <scope>DISRUPTION PHENOTYPE</scope>
</reference>
<reference key="30">
    <citation type="journal article" date="2015" name="PLoS Genet.">
        <title>Phylum-level conservation of regulatory information in nematodes despite extensive non-coding sequence divergence.</title>
        <authorList>
            <person name="Gordon K.L."/>
            <person name="Arthur R.K."/>
            <person name="Ruvinsky I."/>
        </authorList>
    </citation>
    <scope>DEVELOPMENTAL STAGE</scope>
</reference>
<reference evidence="34" key="31">
    <citation type="journal article" date="2016" name="Dev. Biol.">
        <title>A 44 bp intestine-specific hermaphrodite-specific enhancer from the C. elegans vit-2 vitellogenin gene is directly regulated by ELT-2, MAB-3, FKH-9 and DAF-16 and indirectly regulated by the germline, by daf-2/insulin signaling and by the TGF-beta/Sma/Mab pathway.</title>
        <authorList>
            <person name="Goszczynski B."/>
            <person name="Captan V.V."/>
            <person name="Danielson A.M."/>
            <person name="Lancaster B.R."/>
            <person name="McGhee J.D."/>
        </authorList>
    </citation>
    <scope>FUNCTION</scope>
</reference>
<reference key="32">
    <citation type="journal article" date="2016" name="PLoS Genet.">
        <title>Graded proteasome dysfunction in Caenorhabditis elegans activates an adaptive response involving the conserved skn-1 and elt-2 transcription factors and the autophagy-lysosome pathway.</title>
        <authorList>
            <person name="Keith S.A."/>
            <person name="Maddux S.K."/>
            <person name="Zhong Y."/>
            <person name="Chinchankar M.N."/>
            <person name="Ferguson A.A."/>
            <person name="Ghazi A."/>
            <person name="Fisher A.L."/>
        </authorList>
    </citation>
    <scope>FUNCTION</scope>
    <scope>DISRUPTION PHENOTYPE</scope>
</reference>
<reference key="33">
    <citation type="journal article" date="2018" name="PLoS Genet.">
        <title>Non-proteolytic activity of 19S proteasome subunit RPT-6 regulates GATA transcription during response to infection.</title>
        <authorList>
            <person name="Olaitan A.O."/>
            <person name="Aballay A."/>
        </authorList>
    </citation>
    <scope>FUNCTION</scope>
    <scope>INTERACTION WITH RPT-6</scope>
    <scope>SUBCELLULAR LOCATION</scope>
    <scope>DISRUPTION PHENOTYPE</scope>
</reference>
<feature type="chain" id="PRO_0000083472" description="Transcription factor elt-2" evidence="34">
    <location>
        <begin position="1"/>
        <end position="433"/>
    </location>
</feature>
<feature type="zinc finger region" description="GATA-type" evidence="1">
    <location>
        <begin position="237"/>
        <end position="261"/>
    </location>
</feature>
<feature type="region of interest" description="Disordered" evidence="2">
    <location>
        <begin position="1"/>
        <end position="47"/>
    </location>
</feature>
<feature type="region of interest" description="Disordered" evidence="2">
    <location>
        <begin position="194"/>
        <end position="235"/>
    </location>
</feature>
<feature type="region of interest" description="Disordered" evidence="2">
    <location>
        <begin position="275"/>
        <end position="332"/>
    </location>
</feature>
<feature type="compositionally biased region" description="Polar residues" evidence="2">
    <location>
        <begin position="27"/>
        <end position="43"/>
    </location>
</feature>
<feature type="compositionally biased region" description="Low complexity" evidence="2">
    <location>
        <begin position="211"/>
        <end position="234"/>
    </location>
</feature>
<feature type="compositionally biased region" description="Polar residues" evidence="2">
    <location>
        <begin position="310"/>
        <end position="324"/>
    </location>
</feature>
<protein>
    <recommendedName>
        <fullName evidence="34">Transcription factor elt-2</fullName>
    </recommendedName>
    <alternativeName>
        <fullName evidence="34">GATA-type domain-containing protein elt-2</fullName>
    </alternativeName>
</protein>
<sequence length="433" mass="47116">MDNNYNDNVNGWAEMEPSQPMGGLRLPTQNMDPPEQNNESQLSELPRMKIDNDYASPIERQSVITSGTNNYEPKVETVTSFFHTGIDYSNFGMLDQTTMQPFYPLYSGIPVNTLGTFSGYTNSIYDKPSLYDPSIPTINIPSTYPTVAPTYECVKCSQSCGAGMKAVNGGMMCVNCSTPKTTYSPPVAYSTSLGQPPILEIPSEQPTAKIAKQSSKKSSSSNRGSNGSASRRQGLVCSNCNGTNTTLWRRNAEGDPVCNACGLYFKLHHIPRPTSMKKEGALQTRKRKSKSGDSSTPSTSRARERKFERASSSTEKAQRSSNRRAGSAKADRELSTAAVAAATATYVSHADLYPVSSAAVTLPDQTYSNYYQWNTAATAGLMMVPNDQNYVYAATNYQTGLRPADNIQVHVMPVQDDETKAAARDLEAVDGDS</sequence>
<proteinExistence type="evidence at protein level"/>